<evidence type="ECO:0000255" key="1">
    <source>
        <dbReference type="HAMAP-Rule" id="MF_00052"/>
    </source>
</evidence>
<evidence type="ECO:0000255" key="2">
    <source>
        <dbReference type="PROSITE-ProRule" id="PRU01319"/>
    </source>
</evidence>
<accession>A1WHV6</accession>
<dbReference type="EC" id="3.1.26.4" evidence="1"/>
<dbReference type="EMBL" id="CP000542">
    <property type="protein sequence ID" value="ABM57213.1"/>
    <property type="molecule type" value="Genomic_DNA"/>
</dbReference>
<dbReference type="RefSeq" id="WP_011809220.1">
    <property type="nucleotide sequence ID" value="NC_008786.1"/>
</dbReference>
<dbReference type="SMR" id="A1WHV6"/>
<dbReference type="STRING" id="391735.Veis_1452"/>
<dbReference type="GeneID" id="76460077"/>
<dbReference type="KEGG" id="vei:Veis_1452"/>
<dbReference type="eggNOG" id="COG0164">
    <property type="taxonomic scope" value="Bacteria"/>
</dbReference>
<dbReference type="HOGENOM" id="CLU_036532_3_2_4"/>
<dbReference type="OrthoDB" id="9803420at2"/>
<dbReference type="Proteomes" id="UP000000374">
    <property type="component" value="Chromosome"/>
</dbReference>
<dbReference type="GO" id="GO:0005737">
    <property type="term" value="C:cytoplasm"/>
    <property type="evidence" value="ECO:0007669"/>
    <property type="project" value="UniProtKB-SubCell"/>
</dbReference>
<dbReference type="GO" id="GO:0032299">
    <property type="term" value="C:ribonuclease H2 complex"/>
    <property type="evidence" value="ECO:0007669"/>
    <property type="project" value="TreeGrafter"/>
</dbReference>
<dbReference type="GO" id="GO:0030145">
    <property type="term" value="F:manganese ion binding"/>
    <property type="evidence" value="ECO:0007669"/>
    <property type="project" value="UniProtKB-UniRule"/>
</dbReference>
<dbReference type="GO" id="GO:0003723">
    <property type="term" value="F:RNA binding"/>
    <property type="evidence" value="ECO:0007669"/>
    <property type="project" value="InterPro"/>
</dbReference>
<dbReference type="GO" id="GO:0004523">
    <property type="term" value="F:RNA-DNA hybrid ribonuclease activity"/>
    <property type="evidence" value="ECO:0007669"/>
    <property type="project" value="UniProtKB-UniRule"/>
</dbReference>
<dbReference type="GO" id="GO:0043137">
    <property type="term" value="P:DNA replication, removal of RNA primer"/>
    <property type="evidence" value="ECO:0007669"/>
    <property type="project" value="TreeGrafter"/>
</dbReference>
<dbReference type="GO" id="GO:0006298">
    <property type="term" value="P:mismatch repair"/>
    <property type="evidence" value="ECO:0007669"/>
    <property type="project" value="TreeGrafter"/>
</dbReference>
<dbReference type="CDD" id="cd07182">
    <property type="entry name" value="RNase_HII_bacteria_HII_like"/>
    <property type="match status" value="1"/>
</dbReference>
<dbReference type="FunFam" id="3.30.420.10:FF:000006">
    <property type="entry name" value="Ribonuclease HII"/>
    <property type="match status" value="1"/>
</dbReference>
<dbReference type="Gene3D" id="3.30.420.10">
    <property type="entry name" value="Ribonuclease H-like superfamily/Ribonuclease H"/>
    <property type="match status" value="1"/>
</dbReference>
<dbReference type="HAMAP" id="MF_00052_B">
    <property type="entry name" value="RNase_HII_B"/>
    <property type="match status" value="1"/>
</dbReference>
<dbReference type="InterPro" id="IPR022898">
    <property type="entry name" value="RNase_HII"/>
</dbReference>
<dbReference type="InterPro" id="IPR001352">
    <property type="entry name" value="RNase_HII/HIII"/>
</dbReference>
<dbReference type="InterPro" id="IPR024567">
    <property type="entry name" value="RNase_HII/HIII_dom"/>
</dbReference>
<dbReference type="InterPro" id="IPR012337">
    <property type="entry name" value="RNaseH-like_sf"/>
</dbReference>
<dbReference type="InterPro" id="IPR036397">
    <property type="entry name" value="RNaseH_sf"/>
</dbReference>
<dbReference type="NCBIfam" id="NF000595">
    <property type="entry name" value="PRK00015.1-3"/>
    <property type="match status" value="1"/>
</dbReference>
<dbReference type="NCBIfam" id="NF000596">
    <property type="entry name" value="PRK00015.1-4"/>
    <property type="match status" value="1"/>
</dbReference>
<dbReference type="PANTHER" id="PTHR10954">
    <property type="entry name" value="RIBONUCLEASE H2 SUBUNIT A"/>
    <property type="match status" value="1"/>
</dbReference>
<dbReference type="PANTHER" id="PTHR10954:SF18">
    <property type="entry name" value="RIBONUCLEASE HII"/>
    <property type="match status" value="1"/>
</dbReference>
<dbReference type="Pfam" id="PF01351">
    <property type="entry name" value="RNase_HII"/>
    <property type="match status" value="1"/>
</dbReference>
<dbReference type="SUPFAM" id="SSF53098">
    <property type="entry name" value="Ribonuclease H-like"/>
    <property type="match status" value="1"/>
</dbReference>
<dbReference type="PROSITE" id="PS51975">
    <property type="entry name" value="RNASE_H_2"/>
    <property type="match status" value="1"/>
</dbReference>
<name>RNH2_VEREI</name>
<proteinExistence type="inferred from homology"/>
<sequence length="209" mass="22341">MRSGQSSRTEPASLPWHPSGLVAGVDEAGRGPLAGPVMAAAVMLDERQPIMGLADSKKLTPARRASLFDEIRAKALCYSIAQASVQEIDALNILQATLLAMRRAVQGLRLRPALVLVDGNRLPRLDIPAQAIVKGDALQPAISAASILAKVQRDHWCVQVHAEFPQYGFAGHKGYGTAMHLAALRAHGACIHHRRSFAPVARSLPGACR</sequence>
<organism>
    <name type="scientific">Verminephrobacter eiseniae (strain EF01-2)</name>
    <dbReference type="NCBI Taxonomy" id="391735"/>
    <lineage>
        <taxon>Bacteria</taxon>
        <taxon>Pseudomonadati</taxon>
        <taxon>Pseudomonadota</taxon>
        <taxon>Betaproteobacteria</taxon>
        <taxon>Burkholderiales</taxon>
        <taxon>Comamonadaceae</taxon>
        <taxon>Verminephrobacter</taxon>
    </lineage>
</organism>
<feature type="chain" id="PRO_0000334971" description="Ribonuclease HII">
    <location>
        <begin position="1"/>
        <end position="209"/>
    </location>
</feature>
<feature type="domain" description="RNase H type-2" evidence="2">
    <location>
        <begin position="20"/>
        <end position="209"/>
    </location>
</feature>
<feature type="binding site" evidence="1">
    <location>
        <position position="26"/>
    </location>
    <ligand>
        <name>a divalent metal cation</name>
        <dbReference type="ChEBI" id="CHEBI:60240"/>
    </ligand>
</feature>
<feature type="binding site" evidence="1">
    <location>
        <position position="27"/>
    </location>
    <ligand>
        <name>a divalent metal cation</name>
        <dbReference type="ChEBI" id="CHEBI:60240"/>
    </ligand>
</feature>
<feature type="binding site" evidence="1">
    <location>
        <position position="118"/>
    </location>
    <ligand>
        <name>a divalent metal cation</name>
        <dbReference type="ChEBI" id="CHEBI:60240"/>
    </ligand>
</feature>
<protein>
    <recommendedName>
        <fullName evidence="1">Ribonuclease HII</fullName>
        <shortName evidence="1">RNase HII</shortName>
        <ecNumber evidence="1">3.1.26.4</ecNumber>
    </recommendedName>
</protein>
<keyword id="KW-0963">Cytoplasm</keyword>
<keyword id="KW-0255">Endonuclease</keyword>
<keyword id="KW-0378">Hydrolase</keyword>
<keyword id="KW-0464">Manganese</keyword>
<keyword id="KW-0479">Metal-binding</keyword>
<keyword id="KW-0540">Nuclease</keyword>
<keyword id="KW-1185">Reference proteome</keyword>
<gene>
    <name evidence="1" type="primary">rnhB</name>
    <name type="ordered locus">Veis_1452</name>
</gene>
<comment type="function">
    <text evidence="1">Endonuclease that specifically degrades the RNA of RNA-DNA hybrids.</text>
</comment>
<comment type="catalytic activity">
    <reaction evidence="1">
        <text>Endonucleolytic cleavage to 5'-phosphomonoester.</text>
        <dbReference type="EC" id="3.1.26.4"/>
    </reaction>
</comment>
<comment type="cofactor">
    <cofactor evidence="1">
        <name>Mn(2+)</name>
        <dbReference type="ChEBI" id="CHEBI:29035"/>
    </cofactor>
    <cofactor evidence="1">
        <name>Mg(2+)</name>
        <dbReference type="ChEBI" id="CHEBI:18420"/>
    </cofactor>
    <text evidence="1">Manganese or magnesium. Binds 1 divalent metal ion per monomer in the absence of substrate. May bind a second metal ion after substrate binding.</text>
</comment>
<comment type="subcellular location">
    <subcellularLocation>
        <location evidence="1">Cytoplasm</location>
    </subcellularLocation>
</comment>
<comment type="similarity">
    <text evidence="1">Belongs to the RNase HII family.</text>
</comment>
<reference key="1">
    <citation type="submission" date="2006-12" db="EMBL/GenBank/DDBJ databases">
        <title>Complete sequence of chromosome 1 of Verminephrobacter eiseniae EF01-2.</title>
        <authorList>
            <person name="Copeland A."/>
            <person name="Lucas S."/>
            <person name="Lapidus A."/>
            <person name="Barry K."/>
            <person name="Detter J.C."/>
            <person name="Glavina del Rio T."/>
            <person name="Dalin E."/>
            <person name="Tice H."/>
            <person name="Pitluck S."/>
            <person name="Chertkov O."/>
            <person name="Brettin T."/>
            <person name="Bruce D."/>
            <person name="Han C."/>
            <person name="Tapia R."/>
            <person name="Gilna P."/>
            <person name="Schmutz J."/>
            <person name="Larimer F."/>
            <person name="Land M."/>
            <person name="Hauser L."/>
            <person name="Kyrpides N."/>
            <person name="Kim E."/>
            <person name="Stahl D."/>
            <person name="Richardson P."/>
        </authorList>
    </citation>
    <scope>NUCLEOTIDE SEQUENCE [LARGE SCALE GENOMIC DNA]</scope>
    <source>
        <strain>EF01-2</strain>
    </source>
</reference>